<comment type="function">
    <text evidence="1">One of the primary rRNA binding proteins, it binds directly near the 3'-end of the 23S rRNA, where it nucleates assembly of the 50S subunit.</text>
</comment>
<comment type="subunit">
    <text evidence="1">Part of the 50S ribosomal subunit. Forms a cluster with proteins L14 and L19.</text>
</comment>
<comment type="similarity">
    <text evidence="1">Belongs to the universal ribosomal protein uL3 family.</text>
</comment>
<name>RL3_SHOC1</name>
<sequence length="206" mass="22097">MTKGILGRKIGMTQVFAENGEVIPVTVIEAEPNIVLQKKTVESDGYEAIQIGFADAKKPNKPATGHAAKAETAPKRFIKEIRGVNLDEVEVGQAINVTTFAAGDLVDVTGTSKGKGFQGAIKRHNQSRGPMSHGSRYHRRPGSMGPVAPNRVFKGKALPGRMGGEQITMQNLEIVRVDEERNLLLVKGNVPGAKKSYVTVQSAVKA</sequence>
<gene>
    <name evidence="1" type="primary">rplC</name>
    <name type="ordered locus">ABC0150</name>
</gene>
<feature type="chain" id="PRO_0000241312" description="Large ribosomal subunit protein uL3">
    <location>
        <begin position="1"/>
        <end position="206"/>
    </location>
</feature>
<feature type="region of interest" description="Disordered" evidence="2">
    <location>
        <begin position="116"/>
        <end position="149"/>
    </location>
</feature>
<proteinExistence type="inferred from homology"/>
<accession>Q5WLR2</accession>
<protein>
    <recommendedName>
        <fullName evidence="1">Large ribosomal subunit protein uL3</fullName>
    </recommendedName>
    <alternativeName>
        <fullName evidence="3">50S ribosomal protein L3</fullName>
    </alternativeName>
</protein>
<organism>
    <name type="scientific">Shouchella clausii (strain KSM-K16)</name>
    <name type="common">Alkalihalobacillus clausii</name>
    <dbReference type="NCBI Taxonomy" id="66692"/>
    <lineage>
        <taxon>Bacteria</taxon>
        <taxon>Bacillati</taxon>
        <taxon>Bacillota</taxon>
        <taxon>Bacilli</taxon>
        <taxon>Bacillales</taxon>
        <taxon>Bacillaceae</taxon>
        <taxon>Shouchella</taxon>
    </lineage>
</organism>
<reference key="1">
    <citation type="submission" date="2003-10" db="EMBL/GenBank/DDBJ databases">
        <title>The complete genome sequence of the alkaliphilic Bacillus clausii KSM-K16.</title>
        <authorList>
            <person name="Takaki Y."/>
            <person name="Kageyama Y."/>
            <person name="Shimamura S."/>
            <person name="Suzuki H."/>
            <person name="Nishi S."/>
            <person name="Hatada Y."/>
            <person name="Kawai S."/>
            <person name="Ito S."/>
            <person name="Horikoshi K."/>
        </authorList>
    </citation>
    <scope>NUCLEOTIDE SEQUENCE [LARGE SCALE GENOMIC DNA]</scope>
    <source>
        <strain>KSM-K16</strain>
    </source>
</reference>
<dbReference type="EMBL" id="AP006627">
    <property type="protein sequence ID" value="BAD62693.1"/>
    <property type="molecule type" value="Genomic_DNA"/>
</dbReference>
<dbReference type="RefSeq" id="WP_011245014.1">
    <property type="nucleotide sequence ID" value="NC_006582.1"/>
</dbReference>
<dbReference type="SMR" id="Q5WLR2"/>
<dbReference type="STRING" id="66692.ABC0150"/>
<dbReference type="GeneID" id="86924186"/>
<dbReference type="KEGG" id="bcl:ABC0150"/>
<dbReference type="eggNOG" id="COG0087">
    <property type="taxonomic scope" value="Bacteria"/>
</dbReference>
<dbReference type="HOGENOM" id="CLU_044142_4_1_9"/>
<dbReference type="OrthoDB" id="9806135at2"/>
<dbReference type="Proteomes" id="UP000001168">
    <property type="component" value="Chromosome"/>
</dbReference>
<dbReference type="GO" id="GO:0022625">
    <property type="term" value="C:cytosolic large ribosomal subunit"/>
    <property type="evidence" value="ECO:0007669"/>
    <property type="project" value="TreeGrafter"/>
</dbReference>
<dbReference type="GO" id="GO:0019843">
    <property type="term" value="F:rRNA binding"/>
    <property type="evidence" value="ECO:0007669"/>
    <property type="project" value="UniProtKB-UniRule"/>
</dbReference>
<dbReference type="GO" id="GO:0003735">
    <property type="term" value="F:structural constituent of ribosome"/>
    <property type="evidence" value="ECO:0007669"/>
    <property type="project" value="InterPro"/>
</dbReference>
<dbReference type="GO" id="GO:0006412">
    <property type="term" value="P:translation"/>
    <property type="evidence" value="ECO:0007669"/>
    <property type="project" value="UniProtKB-UniRule"/>
</dbReference>
<dbReference type="FunFam" id="2.40.30.10:FF:000004">
    <property type="entry name" value="50S ribosomal protein L3"/>
    <property type="match status" value="1"/>
</dbReference>
<dbReference type="FunFam" id="3.30.160.810:FF:000002">
    <property type="entry name" value="50S ribosomal protein L3"/>
    <property type="match status" value="1"/>
</dbReference>
<dbReference type="Gene3D" id="3.30.160.810">
    <property type="match status" value="1"/>
</dbReference>
<dbReference type="Gene3D" id="2.40.30.10">
    <property type="entry name" value="Translation factors"/>
    <property type="match status" value="1"/>
</dbReference>
<dbReference type="HAMAP" id="MF_01325_B">
    <property type="entry name" value="Ribosomal_uL3_B"/>
    <property type="match status" value="1"/>
</dbReference>
<dbReference type="InterPro" id="IPR000597">
    <property type="entry name" value="Ribosomal_uL3"/>
</dbReference>
<dbReference type="InterPro" id="IPR019927">
    <property type="entry name" value="Ribosomal_uL3_bac/org-type"/>
</dbReference>
<dbReference type="InterPro" id="IPR019926">
    <property type="entry name" value="Ribosomal_uL3_CS"/>
</dbReference>
<dbReference type="InterPro" id="IPR009000">
    <property type="entry name" value="Transl_B-barrel_sf"/>
</dbReference>
<dbReference type="NCBIfam" id="TIGR03625">
    <property type="entry name" value="L3_bact"/>
    <property type="match status" value="1"/>
</dbReference>
<dbReference type="PANTHER" id="PTHR11229">
    <property type="entry name" value="50S RIBOSOMAL PROTEIN L3"/>
    <property type="match status" value="1"/>
</dbReference>
<dbReference type="PANTHER" id="PTHR11229:SF16">
    <property type="entry name" value="LARGE RIBOSOMAL SUBUNIT PROTEIN UL3C"/>
    <property type="match status" value="1"/>
</dbReference>
<dbReference type="Pfam" id="PF00297">
    <property type="entry name" value="Ribosomal_L3"/>
    <property type="match status" value="1"/>
</dbReference>
<dbReference type="SUPFAM" id="SSF50447">
    <property type="entry name" value="Translation proteins"/>
    <property type="match status" value="1"/>
</dbReference>
<dbReference type="PROSITE" id="PS00474">
    <property type="entry name" value="RIBOSOMAL_L3"/>
    <property type="match status" value="1"/>
</dbReference>
<evidence type="ECO:0000255" key="1">
    <source>
        <dbReference type="HAMAP-Rule" id="MF_01325"/>
    </source>
</evidence>
<evidence type="ECO:0000256" key="2">
    <source>
        <dbReference type="SAM" id="MobiDB-lite"/>
    </source>
</evidence>
<evidence type="ECO:0000305" key="3"/>
<keyword id="KW-1185">Reference proteome</keyword>
<keyword id="KW-0687">Ribonucleoprotein</keyword>
<keyword id="KW-0689">Ribosomal protein</keyword>
<keyword id="KW-0694">RNA-binding</keyword>
<keyword id="KW-0699">rRNA-binding</keyword>